<feature type="chain" id="PRO_0000182701" description="Gas vesicle protein O">
    <location>
        <begin position="1"/>
        <end position="140"/>
    </location>
</feature>
<feature type="region of interest" description="Disordered" evidence="2">
    <location>
        <begin position="1"/>
        <end position="61"/>
    </location>
</feature>
<feature type="compositionally biased region" description="Basic and acidic residues" evidence="2">
    <location>
        <begin position="1"/>
        <end position="14"/>
    </location>
</feature>
<feature type="compositionally biased region" description="Polar residues" evidence="2">
    <location>
        <begin position="39"/>
        <end position="56"/>
    </location>
</feature>
<comment type="function">
    <text evidence="1">A minor component of the gas vesicle (GV), may play a role in transcription and/or RNA stability and/or in GV assembly. Gas vesicles are small, hollow, gas filled protein structures found in some microorganisms. They allow positioning of halobacteria at the optimal depth for growth in the poorly aerated shallow brine pools of their habitat.</text>
</comment>
<comment type="function">
    <text evidence="3 4 6">Expression of a 9.5 kb mc-vac DNA fragment containing 2 divergently transcribed regions (gvpD-gvpE-gvpF-gvpG-gvpH-gvpI-gvpJ-gvpK-gvpL-gvpM and gvpA-gvpC-gvpN-gvpO) allows H.volcanii to produce gas vesicles.</text>
</comment>
<comment type="subunit">
    <text evidence="1">Forms homodimers, forms a GvpN-GvpO heterodimer, interacts with GvpC, GvpF, GvpI and GvpL, might interact with GvpA.</text>
</comment>
<comment type="subcellular location">
    <subcellularLocation>
        <location evidence="1">Gas vesicle</location>
    </subcellularLocation>
    <subcellularLocation>
        <location evidence="1">Cytoplasm</location>
    </subcellularLocation>
</comment>
<comment type="induction">
    <text evidence="5 6">Expressed from a single promoter upstream of gvpA; most transcripts stop at the gvpA terminator, with low read-through into downstream gvpC-gvpN-gvpO. Expression starts in early stationary phase and is maximal in stationary phase (PubMed:7683649, PubMed:8757736). Highly expressed in 25% salt, poorly expressed in 15% salt, no gas vesicles are formed at 15% salt (PubMed:8757736).</text>
</comment>
<comment type="disruption phenotype">
    <text evidence="3 4">No longer makes gas vesicles in H.volcanii; cells translate GvpA but do not make gas vesicles.</text>
</comment>
<comment type="miscellaneous">
    <text evidence="3 4">Encoded in a 14-gene locus called mc-vac.</text>
</comment>
<comment type="similarity">
    <text evidence="8">Belongs to the gas vesicle GvpO family.</text>
</comment>
<sequence>MSDQGNEHANHDGIDNAGLSAEVGSGPEAKRTRDEPPEQTASDEAVSNQSPDSTIGLSDAQVRAREAAKELLEYEFEGIIKIEAANGDGWRTVVELVERNAVPDTQDIIGRYEITLDATGSVTGYELLERYRRGDMKEEL</sequence>
<accession>Q02240</accession>
<accession>I3R589</accession>
<proteinExistence type="evidence at transcript level"/>
<gene>
    <name evidence="7" type="primary">gvpO</name>
    <name type="ordered locus">HFX_1693</name>
</gene>
<keyword id="KW-0963">Cytoplasm</keyword>
<keyword id="KW-0304">Gas vesicle</keyword>
<evidence type="ECO:0000250" key="1">
    <source>
        <dbReference type="UniProtKB" id="O51968"/>
    </source>
</evidence>
<evidence type="ECO:0000256" key="2">
    <source>
        <dbReference type="SAM" id="MobiDB-lite"/>
    </source>
</evidence>
<evidence type="ECO:0000269" key="3">
    <source>
    </source>
</evidence>
<evidence type="ECO:0000269" key="4">
    <source>
    </source>
</evidence>
<evidence type="ECO:0000269" key="5">
    <source>
    </source>
</evidence>
<evidence type="ECO:0000269" key="6">
    <source>
    </source>
</evidence>
<evidence type="ECO:0000303" key="7">
    <source>
    </source>
</evidence>
<evidence type="ECO:0000305" key="8"/>
<name>GVPO_HALMT</name>
<protein>
    <recommendedName>
        <fullName>Gas vesicle protein O</fullName>
        <shortName evidence="7">GvpO</shortName>
    </recommendedName>
</protein>
<reference key="1">
    <citation type="journal article" date="1992" name="J. Mol. Biol.">
        <title>Three different but related gene clusters encoding gas vesicles in halophilic archaea.</title>
        <authorList>
            <person name="Englert C."/>
            <person name="Krueger K."/>
            <person name="Offner S."/>
            <person name="Pfeifer F."/>
        </authorList>
    </citation>
    <scope>NUCLEOTIDE SEQUENCE [GENOMIC DNA]</scope>
    <scope>GAS VESICLE GENE CLUSTER</scope>
    <scope>DISRUPTION PHENOTYPE</scope>
    <source>
        <strain>ATCC 33500 / DSM 1411 / JCM 8866 / NBRC 14739 / NCIMB 2177 / R-4</strain>
    </source>
</reference>
<reference key="2">
    <citation type="journal article" date="2012" name="J. Bacteriol.">
        <title>Complete genome sequence of the metabolically versatile halophilic archaeon Haloferax mediterranei, a poly(3-hydroxybutyrate-co-3-hydroxyvalerate) producer.</title>
        <authorList>
            <person name="Han J."/>
            <person name="Zhang F."/>
            <person name="Hou J."/>
            <person name="Liu X."/>
            <person name="Li M."/>
            <person name="Liu H."/>
            <person name="Cai L."/>
            <person name="Zhang B."/>
            <person name="Chen Y."/>
            <person name="Zhou J."/>
            <person name="Hu S."/>
            <person name="Xiang H."/>
        </authorList>
    </citation>
    <scope>NUCLEOTIDE SEQUENCE [LARGE SCALE GENOMIC DNA]</scope>
    <source>
        <strain>ATCC 33500 / DSM 1411 / JCM 8866 / NBRC 14739 / NCIMB 2177 / R-4</strain>
    </source>
</reference>
<reference key="3">
    <citation type="journal article" date="1992" name="Mol. Microbiol.">
        <title>Functional analysis of the gas vesicle gene cluster of the halophilic archaeon Haloferax mediterranei defines the vac-region boundary and suggests a regulatory role for the gvpD gene or its product.</title>
        <authorList>
            <person name="Englert C."/>
            <person name="Wanner G."/>
            <person name="Pfeifer F."/>
        </authorList>
    </citation>
    <scope>FUNCTION</scope>
    <scope>DISRUPTION PHENOTYPE</scope>
</reference>
<reference key="4">
    <citation type="journal article" date="1993" name="J. Biol. Chem.">
        <title>Analysis of gas vesicle gene expression in Haloferax mediterranei reveals that GvpA and GvpC are both gas vesicle structural proteins.</title>
        <authorList>
            <person name="Englert C."/>
            <person name="Pfeifer F."/>
        </authorList>
    </citation>
    <scope>INDUCTION</scope>
</reference>
<reference key="5">
    <citation type="journal article" date="1996" name="Microbiology">
        <title>Influence of salt on the transcription of the gas-vesicle genes of Haloferax mediterranei and identification of the endogenous transcriptional activator gene.</title>
        <authorList>
            <person name="Roeder R."/>
            <person name="Pfeifer F."/>
        </authorList>
    </citation>
    <scope>INDUCTION BY SALT</scope>
    <source>
        <strain>ATCC 33500 / DSM 1411 / JCM 8866 / NBRC 14739 / NCIMB 2177 / R-4</strain>
    </source>
</reference>
<dbReference type="EMBL" id="X64701">
    <property type="protein sequence ID" value="CAA45942.1"/>
    <property type="molecule type" value="Genomic_DNA"/>
</dbReference>
<dbReference type="EMBL" id="CP001868">
    <property type="protein sequence ID" value="AFK19399.1"/>
    <property type="molecule type" value="Genomic_DNA"/>
</dbReference>
<dbReference type="PIR" id="S28113">
    <property type="entry name" value="S28113"/>
</dbReference>
<dbReference type="RefSeq" id="WP_004056709.1">
    <property type="nucleotide sequence ID" value="NC_017941.2"/>
</dbReference>
<dbReference type="STRING" id="523841.HFX_1693"/>
<dbReference type="PaxDb" id="523841-HFX_1693"/>
<dbReference type="GeneID" id="40157048"/>
<dbReference type="KEGG" id="hme:HFX_1693"/>
<dbReference type="eggNOG" id="arCOG04040">
    <property type="taxonomic scope" value="Archaea"/>
</dbReference>
<dbReference type="HOGENOM" id="CLU_142302_0_0_2"/>
<dbReference type="OrthoDB" id="205220at2157"/>
<dbReference type="Proteomes" id="UP000006469">
    <property type="component" value="Chromosome"/>
</dbReference>
<dbReference type="GO" id="GO:0005737">
    <property type="term" value="C:cytoplasm"/>
    <property type="evidence" value="ECO:0007669"/>
    <property type="project" value="UniProtKB-SubCell"/>
</dbReference>
<dbReference type="GO" id="GO:0031411">
    <property type="term" value="C:gas vesicle"/>
    <property type="evidence" value="ECO:0007669"/>
    <property type="project" value="UniProtKB-SubCell"/>
</dbReference>
<dbReference type="GO" id="GO:0031412">
    <property type="term" value="P:gas vesicle organization"/>
    <property type="evidence" value="ECO:0007669"/>
    <property type="project" value="InterPro"/>
</dbReference>
<dbReference type="InterPro" id="IPR008634">
    <property type="entry name" value="Gas-vesicle_GvpO"/>
</dbReference>
<dbReference type="Pfam" id="PF05800">
    <property type="entry name" value="GvpO"/>
    <property type="match status" value="1"/>
</dbReference>
<dbReference type="PIRSF" id="PIRSF028743">
    <property type="entry name" value="GvpO_protein"/>
    <property type="match status" value="1"/>
</dbReference>
<organism>
    <name type="scientific">Haloferax mediterranei (strain ATCC 33500 / DSM 1411 / JCM 8866 / NBRC 14739 / NCIMB 2177 / R-4)</name>
    <name type="common">Halobacterium mediterranei</name>
    <dbReference type="NCBI Taxonomy" id="523841"/>
    <lineage>
        <taxon>Archaea</taxon>
        <taxon>Methanobacteriati</taxon>
        <taxon>Methanobacteriota</taxon>
        <taxon>Stenosarchaea group</taxon>
        <taxon>Halobacteria</taxon>
        <taxon>Halobacteriales</taxon>
        <taxon>Haloferacaceae</taxon>
        <taxon>Haloferax</taxon>
    </lineage>
</organism>